<reference key="1">
    <citation type="submission" date="2007-09" db="EMBL/GenBank/DDBJ databases">
        <title>Complete genome sequence of Rickettsia rickettsii.</title>
        <authorList>
            <person name="Madan A."/>
            <person name="Fahey J."/>
            <person name="Helton E."/>
            <person name="Ketteman M."/>
            <person name="Madan A."/>
            <person name="Rodrigues S."/>
            <person name="Sanchez A."/>
            <person name="Dasch G."/>
            <person name="Eremeeva M."/>
        </authorList>
    </citation>
    <scope>NUCLEOTIDE SEQUENCE [LARGE SCALE GENOMIC DNA]</scope>
    <source>
        <strain>Sheila Smith</strain>
    </source>
</reference>
<dbReference type="EMBL" id="CP000848">
    <property type="protein sequence ID" value="ABV75782.1"/>
    <property type="molecule type" value="Genomic_DNA"/>
</dbReference>
<dbReference type="RefSeq" id="WP_012150391.1">
    <property type="nucleotide sequence ID" value="NZ_CP121767.1"/>
</dbReference>
<dbReference type="SMR" id="A8GQV7"/>
<dbReference type="GeneID" id="79936966"/>
<dbReference type="KEGG" id="rri:A1G_01000"/>
<dbReference type="HOGENOM" id="CLU_002794_4_1_5"/>
<dbReference type="Proteomes" id="UP000006832">
    <property type="component" value="Chromosome"/>
</dbReference>
<dbReference type="GO" id="GO:0005737">
    <property type="term" value="C:cytoplasm"/>
    <property type="evidence" value="ECO:0007669"/>
    <property type="project" value="UniProtKB-SubCell"/>
</dbReference>
<dbReference type="GO" id="GO:0005525">
    <property type="term" value="F:GTP binding"/>
    <property type="evidence" value="ECO:0007669"/>
    <property type="project" value="UniProtKB-UniRule"/>
</dbReference>
<dbReference type="GO" id="GO:0003924">
    <property type="term" value="F:GTPase activity"/>
    <property type="evidence" value="ECO:0007669"/>
    <property type="project" value="InterPro"/>
</dbReference>
<dbReference type="GO" id="GO:0003746">
    <property type="term" value="F:translation elongation factor activity"/>
    <property type="evidence" value="ECO:0007669"/>
    <property type="project" value="UniProtKB-UniRule"/>
</dbReference>
<dbReference type="GO" id="GO:0032790">
    <property type="term" value="P:ribosome disassembly"/>
    <property type="evidence" value="ECO:0007669"/>
    <property type="project" value="TreeGrafter"/>
</dbReference>
<dbReference type="CDD" id="cd01886">
    <property type="entry name" value="EF-G"/>
    <property type="match status" value="1"/>
</dbReference>
<dbReference type="CDD" id="cd16262">
    <property type="entry name" value="EFG_III"/>
    <property type="match status" value="1"/>
</dbReference>
<dbReference type="CDD" id="cd01434">
    <property type="entry name" value="EFG_mtEFG1_IV"/>
    <property type="match status" value="1"/>
</dbReference>
<dbReference type="CDD" id="cd03713">
    <property type="entry name" value="EFG_mtEFG_C"/>
    <property type="match status" value="1"/>
</dbReference>
<dbReference type="CDD" id="cd04088">
    <property type="entry name" value="EFG_mtEFG_II"/>
    <property type="match status" value="1"/>
</dbReference>
<dbReference type="FunFam" id="2.40.30.10:FF:000006">
    <property type="entry name" value="Elongation factor G"/>
    <property type="match status" value="1"/>
</dbReference>
<dbReference type="FunFam" id="3.30.230.10:FF:000003">
    <property type="entry name" value="Elongation factor G"/>
    <property type="match status" value="1"/>
</dbReference>
<dbReference type="FunFam" id="3.30.70.240:FF:000001">
    <property type="entry name" value="Elongation factor G"/>
    <property type="match status" value="1"/>
</dbReference>
<dbReference type="FunFam" id="3.30.70.870:FF:000001">
    <property type="entry name" value="Elongation factor G"/>
    <property type="match status" value="1"/>
</dbReference>
<dbReference type="FunFam" id="3.40.50.300:FF:000029">
    <property type="entry name" value="Elongation factor G"/>
    <property type="match status" value="1"/>
</dbReference>
<dbReference type="Gene3D" id="3.30.230.10">
    <property type="match status" value="1"/>
</dbReference>
<dbReference type="Gene3D" id="3.30.70.240">
    <property type="match status" value="1"/>
</dbReference>
<dbReference type="Gene3D" id="3.30.70.870">
    <property type="entry name" value="Elongation Factor G (Translational Gtpase), domain 3"/>
    <property type="match status" value="1"/>
</dbReference>
<dbReference type="Gene3D" id="3.40.50.300">
    <property type="entry name" value="P-loop containing nucleotide triphosphate hydrolases"/>
    <property type="match status" value="1"/>
</dbReference>
<dbReference type="Gene3D" id="2.40.30.10">
    <property type="entry name" value="Translation factors"/>
    <property type="match status" value="1"/>
</dbReference>
<dbReference type="HAMAP" id="MF_00054_B">
    <property type="entry name" value="EF_G_EF_2_B"/>
    <property type="match status" value="1"/>
</dbReference>
<dbReference type="InterPro" id="IPR053905">
    <property type="entry name" value="EF-G-like_DII"/>
</dbReference>
<dbReference type="InterPro" id="IPR041095">
    <property type="entry name" value="EFG_II"/>
</dbReference>
<dbReference type="InterPro" id="IPR009022">
    <property type="entry name" value="EFG_III"/>
</dbReference>
<dbReference type="InterPro" id="IPR035647">
    <property type="entry name" value="EFG_III/V"/>
</dbReference>
<dbReference type="InterPro" id="IPR047872">
    <property type="entry name" value="EFG_IV"/>
</dbReference>
<dbReference type="InterPro" id="IPR035649">
    <property type="entry name" value="EFG_V"/>
</dbReference>
<dbReference type="InterPro" id="IPR000640">
    <property type="entry name" value="EFG_V-like"/>
</dbReference>
<dbReference type="InterPro" id="IPR031157">
    <property type="entry name" value="G_TR_CS"/>
</dbReference>
<dbReference type="InterPro" id="IPR027417">
    <property type="entry name" value="P-loop_NTPase"/>
</dbReference>
<dbReference type="InterPro" id="IPR020568">
    <property type="entry name" value="Ribosomal_Su5_D2-typ_SF"/>
</dbReference>
<dbReference type="InterPro" id="IPR014721">
    <property type="entry name" value="Ribsml_uS5_D2-typ_fold_subgr"/>
</dbReference>
<dbReference type="InterPro" id="IPR005225">
    <property type="entry name" value="Small_GTP-bd"/>
</dbReference>
<dbReference type="InterPro" id="IPR000795">
    <property type="entry name" value="T_Tr_GTP-bd_dom"/>
</dbReference>
<dbReference type="InterPro" id="IPR009000">
    <property type="entry name" value="Transl_B-barrel_sf"/>
</dbReference>
<dbReference type="InterPro" id="IPR004540">
    <property type="entry name" value="Transl_elong_EFG/EF2"/>
</dbReference>
<dbReference type="InterPro" id="IPR005517">
    <property type="entry name" value="Transl_elong_EFG/EF2_IV"/>
</dbReference>
<dbReference type="NCBIfam" id="TIGR00484">
    <property type="entry name" value="EF-G"/>
    <property type="match status" value="1"/>
</dbReference>
<dbReference type="NCBIfam" id="NF009381">
    <property type="entry name" value="PRK12740.1-5"/>
    <property type="match status" value="1"/>
</dbReference>
<dbReference type="NCBIfam" id="TIGR00231">
    <property type="entry name" value="small_GTP"/>
    <property type="match status" value="1"/>
</dbReference>
<dbReference type="PANTHER" id="PTHR43261:SF1">
    <property type="entry name" value="RIBOSOME-RELEASING FACTOR 2, MITOCHONDRIAL"/>
    <property type="match status" value="1"/>
</dbReference>
<dbReference type="PANTHER" id="PTHR43261">
    <property type="entry name" value="TRANSLATION ELONGATION FACTOR G-RELATED"/>
    <property type="match status" value="1"/>
</dbReference>
<dbReference type="Pfam" id="PF22042">
    <property type="entry name" value="EF-G_D2"/>
    <property type="match status" value="1"/>
</dbReference>
<dbReference type="Pfam" id="PF00679">
    <property type="entry name" value="EFG_C"/>
    <property type="match status" value="1"/>
</dbReference>
<dbReference type="Pfam" id="PF14492">
    <property type="entry name" value="EFG_III"/>
    <property type="match status" value="1"/>
</dbReference>
<dbReference type="Pfam" id="PF03764">
    <property type="entry name" value="EFG_IV"/>
    <property type="match status" value="1"/>
</dbReference>
<dbReference type="Pfam" id="PF00009">
    <property type="entry name" value="GTP_EFTU"/>
    <property type="match status" value="1"/>
</dbReference>
<dbReference type="PRINTS" id="PR00315">
    <property type="entry name" value="ELONGATNFCT"/>
</dbReference>
<dbReference type="SMART" id="SM00838">
    <property type="entry name" value="EFG_C"/>
    <property type="match status" value="1"/>
</dbReference>
<dbReference type="SMART" id="SM00889">
    <property type="entry name" value="EFG_IV"/>
    <property type="match status" value="1"/>
</dbReference>
<dbReference type="SUPFAM" id="SSF54980">
    <property type="entry name" value="EF-G C-terminal domain-like"/>
    <property type="match status" value="2"/>
</dbReference>
<dbReference type="SUPFAM" id="SSF52540">
    <property type="entry name" value="P-loop containing nucleoside triphosphate hydrolases"/>
    <property type="match status" value="1"/>
</dbReference>
<dbReference type="SUPFAM" id="SSF54211">
    <property type="entry name" value="Ribosomal protein S5 domain 2-like"/>
    <property type="match status" value="1"/>
</dbReference>
<dbReference type="SUPFAM" id="SSF50447">
    <property type="entry name" value="Translation proteins"/>
    <property type="match status" value="1"/>
</dbReference>
<dbReference type="PROSITE" id="PS00301">
    <property type="entry name" value="G_TR_1"/>
    <property type="match status" value="1"/>
</dbReference>
<dbReference type="PROSITE" id="PS51722">
    <property type="entry name" value="G_TR_2"/>
    <property type="match status" value="1"/>
</dbReference>
<protein>
    <recommendedName>
        <fullName evidence="1">Elongation factor G</fullName>
        <shortName evidence="1">EF-G</shortName>
    </recommendedName>
</protein>
<name>EFG_RICRS</name>
<sequence>MSKINKLEHIRNIGICAHIDAGKTTTTERILYYTGKSHKIGEVHEGGATMDWMEQEQERGITITSAATTCRWQDKIINIIDTPGHVDFTIEVERSLRVLDGAVAVFDGVAGVEPQSETVWRQADKYNVPRMCFVNKMDRMGADFYRCVEMLKDRLGAKPLVIQLPVGIEENFKGIIDLIKMKAVIWKDEALGAEYFEEDIPADMKDKAEEYRAKLLDMVVELDDHVMEKYLSGEEVTAEEIKRLIRKGTISAAFYPVLCGSAFKNKGVQPLLDAVVDFLPSPIDIGIVKGMEVSTGEETDFPISVTEPFAALAFKIMNDPFVGSLTFIRIYSGKITSGTTVINTVKNKREKIGRMLLMHANNREDVKEASAGDIVALAGLKDTTTGDTLSDIDQQVILERMEFPEPVIELAVEPKSTADQEKMGLALSRLAAEDPSFRVSTDYETGQTVIKGMGELHLEIIIDRMRREFKVEANIGAPQVAYRETITKVCEIDYTHKKQSGGAGQFARVKIIFEPLKEVKDLKDEDKNKNFVFESKIIGGAVPKEYIPGVEKGLNNIRETGVIAGYPMIDFKATLVDGAFHDVDSSVLAFEIAAKAAFREGMPKGNPKLLEPIMQVEVITPDEYMGDIIGDLNSRRGQIQSMDPRGNAQVVTANVPLAEMFGYVNTLRSLSQGRAQFSMIFSHYDQVPSQVADIIKAKK</sequence>
<organism>
    <name type="scientific">Rickettsia rickettsii (strain Sheila Smith)</name>
    <dbReference type="NCBI Taxonomy" id="392021"/>
    <lineage>
        <taxon>Bacteria</taxon>
        <taxon>Pseudomonadati</taxon>
        <taxon>Pseudomonadota</taxon>
        <taxon>Alphaproteobacteria</taxon>
        <taxon>Rickettsiales</taxon>
        <taxon>Rickettsiaceae</taxon>
        <taxon>Rickettsieae</taxon>
        <taxon>Rickettsia</taxon>
        <taxon>spotted fever group</taxon>
    </lineage>
</organism>
<gene>
    <name evidence="1" type="primary">fusA</name>
    <name type="ordered locus">A1G_01000</name>
</gene>
<evidence type="ECO:0000255" key="1">
    <source>
        <dbReference type="HAMAP-Rule" id="MF_00054"/>
    </source>
</evidence>
<comment type="function">
    <text evidence="1">Catalyzes the GTP-dependent ribosomal translocation step during translation elongation. During this step, the ribosome changes from the pre-translocational (PRE) to the post-translocational (POST) state as the newly formed A-site-bound peptidyl-tRNA and P-site-bound deacylated tRNA move to the P and E sites, respectively. Catalyzes the coordinated movement of the two tRNA molecules, the mRNA and conformational changes in the ribosome.</text>
</comment>
<comment type="subcellular location">
    <subcellularLocation>
        <location evidence="1">Cytoplasm</location>
    </subcellularLocation>
</comment>
<comment type="similarity">
    <text evidence="1">Belongs to the TRAFAC class translation factor GTPase superfamily. Classic translation factor GTPase family. EF-G/EF-2 subfamily.</text>
</comment>
<keyword id="KW-0963">Cytoplasm</keyword>
<keyword id="KW-0251">Elongation factor</keyword>
<keyword id="KW-0342">GTP-binding</keyword>
<keyword id="KW-0547">Nucleotide-binding</keyword>
<keyword id="KW-0648">Protein biosynthesis</keyword>
<proteinExistence type="inferred from homology"/>
<feature type="chain" id="PRO_1000008877" description="Elongation factor G">
    <location>
        <begin position="1"/>
        <end position="699"/>
    </location>
</feature>
<feature type="domain" description="tr-type G">
    <location>
        <begin position="8"/>
        <end position="283"/>
    </location>
</feature>
<feature type="binding site" evidence="1">
    <location>
        <begin position="17"/>
        <end position="24"/>
    </location>
    <ligand>
        <name>GTP</name>
        <dbReference type="ChEBI" id="CHEBI:37565"/>
    </ligand>
</feature>
<feature type="binding site" evidence="1">
    <location>
        <begin position="81"/>
        <end position="85"/>
    </location>
    <ligand>
        <name>GTP</name>
        <dbReference type="ChEBI" id="CHEBI:37565"/>
    </ligand>
</feature>
<feature type="binding site" evidence="1">
    <location>
        <begin position="135"/>
        <end position="138"/>
    </location>
    <ligand>
        <name>GTP</name>
        <dbReference type="ChEBI" id="CHEBI:37565"/>
    </ligand>
</feature>
<accession>A8GQV7</accession>